<dbReference type="EMBL" id="DN720226">
    <property type="status" value="NOT_ANNOTATED_CDS"/>
    <property type="molecule type" value="mRNA"/>
</dbReference>
<dbReference type="EMBL" id="BN000845">
    <property type="protein sequence ID" value="CAJ43805.1"/>
    <property type="molecule type" value="Genomic_DNA"/>
</dbReference>
<dbReference type="FunCoup" id="A2BDG9">
    <property type="interactions" value="63"/>
</dbReference>
<dbReference type="GlyCosmos" id="A2BDG9">
    <property type="glycosylation" value="2 sites, No reported glycans"/>
</dbReference>
<dbReference type="Ensembl" id="ENSGACT00005008833">
    <property type="protein sequence ID" value="ENSGACP00005008563"/>
    <property type="gene ID" value="ENSGACG00005004473"/>
</dbReference>
<dbReference type="Ensembl" id="ENSGACT00010005161">
    <property type="protein sequence ID" value="ENSGACP00010005024"/>
    <property type="gene ID" value="ENSGACG00010002484"/>
</dbReference>
<dbReference type="Ensembl" id="ENSGACT00015028478">
    <property type="protein sequence ID" value="ENSGACP00015027862"/>
    <property type="gene ID" value="ENSGACG00015012089"/>
</dbReference>
<dbReference type="eggNOG" id="ENOG502SCEE">
    <property type="taxonomic scope" value="Eukaryota"/>
</dbReference>
<dbReference type="InParanoid" id="A2BDG9"/>
<dbReference type="OMA" id="QVLATCW"/>
<dbReference type="OrthoDB" id="8952098at2759"/>
<dbReference type="TreeFam" id="TF330766"/>
<dbReference type="Bgee" id="ENSGACG00000006832">
    <property type="expression patterns" value="Expressed in telencephalon and 3 other cell types or tissues"/>
</dbReference>
<dbReference type="GO" id="GO:0005886">
    <property type="term" value="C:plasma membrane"/>
    <property type="evidence" value="ECO:0007669"/>
    <property type="project" value="UniProtKB-SubCell"/>
</dbReference>
<dbReference type="GO" id="GO:0098552">
    <property type="term" value="C:side of membrane"/>
    <property type="evidence" value="ECO:0007669"/>
    <property type="project" value="UniProtKB-KW"/>
</dbReference>
<dbReference type="InterPro" id="IPR029238">
    <property type="entry name" value="Shadoo"/>
</dbReference>
<dbReference type="PANTHER" id="PTHR28552">
    <property type="entry name" value="SHADOW OF PRION PROTEIN"/>
    <property type="match status" value="1"/>
</dbReference>
<dbReference type="PANTHER" id="PTHR28552:SF1">
    <property type="entry name" value="SHADOW OF PRION PROTEIN"/>
    <property type="match status" value="1"/>
</dbReference>
<feature type="signal peptide" evidence="2">
    <location>
        <begin position="1"/>
        <end position="27"/>
    </location>
</feature>
<feature type="chain" id="PRO_0000320175" description="Shadow of prion protein">
    <location>
        <begin position="28"/>
        <end position="125"/>
    </location>
</feature>
<feature type="propeptide" id="PRO_0000320176" description="Removed in mature form" evidence="2">
    <location>
        <begin position="126"/>
        <end position="155"/>
    </location>
</feature>
<feature type="region of interest" description="Disordered" evidence="3">
    <location>
        <begin position="29"/>
        <end position="71"/>
    </location>
</feature>
<feature type="compositionally biased region" description="Gly residues" evidence="3">
    <location>
        <begin position="50"/>
        <end position="62"/>
    </location>
</feature>
<feature type="lipid moiety-binding region" description="GPI-anchor amidated serine" evidence="2">
    <location>
        <position position="125"/>
    </location>
</feature>
<feature type="glycosylation site" description="N-linked (GlcNAc...) asparagine" evidence="2">
    <location>
        <position position="113"/>
    </location>
</feature>
<feature type="glycosylation site" description="N-linked (GlcNAc...) asparagine" evidence="2">
    <location>
        <position position="128"/>
    </location>
</feature>
<sequence length="155" mass="16302">MSGMNQVVATCWTCLLLSAFLCEPVLSKGGRGGSRGSSRGSHSRSPKAGGYRGGGPHNGGTRGSRYRGRSSPVRVASAAAAGAAVALTADKWYASAYRRSKADGSDEELDYYNRTNYFDAQMSSSTQNGSSLSQLVSIIIATFSPKYGLLMDSIL</sequence>
<gene>
    <name type="primary">sprn</name>
</gene>
<comment type="function">
    <text evidence="1">Prion-like protein that has PrP(C)-like neuroprotective activity.</text>
</comment>
<comment type="subcellular location">
    <subcellularLocation>
        <location evidence="1">Cell membrane</location>
        <topology evidence="1">Lipid-anchor</topology>
        <topology evidence="1">GPI-anchor</topology>
    </subcellularLocation>
</comment>
<comment type="similarity">
    <text evidence="4">Belongs to the SPRN family.</text>
</comment>
<protein>
    <recommendedName>
        <fullName>Shadow of prion protein</fullName>
        <shortName>Protein shadoo</shortName>
    </recommendedName>
</protein>
<organism>
    <name type="scientific">Gasterosteus aculeatus</name>
    <name type="common">Three-spined stickleback</name>
    <dbReference type="NCBI Taxonomy" id="69293"/>
    <lineage>
        <taxon>Eukaryota</taxon>
        <taxon>Metazoa</taxon>
        <taxon>Chordata</taxon>
        <taxon>Craniata</taxon>
        <taxon>Vertebrata</taxon>
        <taxon>Euteleostomi</taxon>
        <taxon>Actinopterygii</taxon>
        <taxon>Neopterygii</taxon>
        <taxon>Teleostei</taxon>
        <taxon>Neoteleostei</taxon>
        <taxon>Acanthomorphata</taxon>
        <taxon>Eupercaria</taxon>
        <taxon>Perciformes</taxon>
        <taxon>Cottioidei</taxon>
        <taxon>Gasterosteales</taxon>
        <taxon>Gasterosteidae</taxon>
        <taxon>Gasterosteus</taxon>
    </lineage>
</organism>
<accession>A2BDG9</accession>
<keyword id="KW-0034">Amyloid</keyword>
<keyword id="KW-1003">Cell membrane</keyword>
<keyword id="KW-0325">Glycoprotein</keyword>
<keyword id="KW-0336">GPI-anchor</keyword>
<keyword id="KW-0449">Lipoprotein</keyword>
<keyword id="KW-0472">Membrane</keyword>
<keyword id="KW-0640">Prion</keyword>
<keyword id="KW-0732">Signal</keyword>
<proteinExistence type="evidence at transcript level"/>
<evidence type="ECO:0000250" key="1"/>
<evidence type="ECO:0000255" key="2"/>
<evidence type="ECO:0000256" key="3">
    <source>
        <dbReference type="SAM" id="MobiDB-lite"/>
    </source>
</evidence>
<evidence type="ECO:0000305" key="4"/>
<reference key="1">
    <citation type="submission" date="2005-09" db="EMBL/GenBank/DDBJ databases">
        <title>Expressed sequence tags from Gasterosteus aculeatus.</title>
        <authorList>
            <person name="Kingsley D.M."/>
            <person name="Peichel C."/>
            <person name="Balabahdra S."/>
            <person name="Grimwood J."/>
            <person name="Dickson M."/>
            <person name="Schmutz J."/>
            <person name="Myers R.M."/>
        </authorList>
    </citation>
    <scope>NUCLEOTIDE SEQUENCE [MRNA]</scope>
</reference>
<reference key="2">
    <citation type="journal article" date="2007" name="BMC Genomics">
        <title>Comparative genomic analysis of prion genes.</title>
        <authorList>
            <person name="Premzl M."/>
            <person name="Gamulin V."/>
        </authorList>
    </citation>
    <scope>IDENTIFICATION</scope>
</reference>
<name>SPRN_GASAC</name>